<reference key="1">
    <citation type="journal article" date="2001" name="J. Bacteriol.">
        <title>Genome of the bacterium Streptococcus pneumoniae strain R6.</title>
        <authorList>
            <person name="Hoskins J."/>
            <person name="Alborn W.E. Jr."/>
            <person name="Arnold J."/>
            <person name="Blaszczak L.C."/>
            <person name="Burgett S."/>
            <person name="DeHoff B.S."/>
            <person name="Estrem S.T."/>
            <person name="Fritz L."/>
            <person name="Fu D.-J."/>
            <person name="Fuller W."/>
            <person name="Geringer C."/>
            <person name="Gilmour R."/>
            <person name="Glass J.S."/>
            <person name="Khoja H."/>
            <person name="Kraft A.R."/>
            <person name="Lagace R.E."/>
            <person name="LeBlanc D.J."/>
            <person name="Lee L.N."/>
            <person name="Lefkowitz E.J."/>
            <person name="Lu J."/>
            <person name="Matsushima P."/>
            <person name="McAhren S.M."/>
            <person name="McHenney M."/>
            <person name="McLeaster K."/>
            <person name="Mundy C.W."/>
            <person name="Nicas T.I."/>
            <person name="Norris F.H."/>
            <person name="O'Gara M."/>
            <person name="Peery R.B."/>
            <person name="Robertson G.T."/>
            <person name="Rockey P."/>
            <person name="Sun P.-M."/>
            <person name="Winkler M.E."/>
            <person name="Yang Y."/>
            <person name="Young-Bellido M."/>
            <person name="Zhao G."/>
            <person name="Zook C.A."/>
            <person name="Baltz R.H."/>
            <person name="Jaskunas S.R."/>
            <person name="Rosteck P.R. Jr."/>
            <person name="Skatrud P.L."/>
            <person name="Glass J.I."/>
        </authorList>
    </citation>
    <scope>NUCLEOTIDE SEQUENCE [LARGE SCALE GENOMIC DNA]</scope>
    <source>
        <strain>ATCC BAA-255 / R6</strain>
    </source>
</reference>
<feature type="initiator methionine" description="Removed" evidence="1">
    <location>
        <position position="1"/>
    </location>
</feature>
<feature type="chain" id="PRO_0000111702" description="Ribonuclease HIII">
    <location>
        <begin position="2"/>
        <end position="290"/>
    </location>
</feature>
<feature type="domain" description="RNase H type-2" evidence="2">
    <location>
        <begin position="78"/>
        <end position="290"/>
    </location>
</feature>
<feature type="binding site" evidence="1">
    <location>
        <position position="84"/>
    </location>
    <ligand>
        <name>a divalent metal cation</name>
        <dbReference type="ChEBI" id="CHEBI:60240"/>
    </ligand>
</feature>
<feature type="binding site" evidence="1">
    <location>
        <position position="85"/>
    </location>
    <ligand>
        <name>a divalent metal cation</name>
        <dbReference type="ChEBI" id="CHEBI:60240"/>
    </ligand>
</feature>
<feature type="binding site" evidence="1">
    <location>
        <position position="187"/>
    </location>
    <ligand>
        <name>a divalent metal cation</name>
        <dbReference type="ChEBI" id="CHEBI:60240"/>
    </ligand>
</feature>
<gene>
    <name type="primary">rnhC</name>
    <name type="synonym">rnhB</name>
    <name type="ordered locus">spr0365</name>
</gene>
<protein>
    <recommendedName>
        <fullName>Ribonuclease HIII</fullName>
        <shortName>RNase HIII</shortName>
        <ecNumber>3.1.26.4</ecNumber>
    </recommendedName>
</protein>
<comment type="function">
    <text evidence="1">Endonuclease that specifically degrades the RNA of RNA-DNA hybrids.</text>
</comment>
<comment type="catalytic activity">
    <reaction>
        <text>Endonucleolytic cleavage to 5'-phosphomonoester.</text>
        <dbReference type="EC" id="3.1.26.4"/>
    </reaction>
</comment>
<comment type="cofactor">
    <cofactor evidence="1">
        <name>Mn(2+)</name>
        <dbReference type="ChEBI" id="CHEBI:29035"/>
    </cofactor>
    <cofactor evidence="1">
        <name>Mg(2+)</name>
        <dbReference type="ChEBI" id="CHEBI:18420"/>
    </cofactor>
    <text evidence="1">Manganese or magnesium. Binds 1 divalent metal ion per monomer in the absence of substrate. May bind a second metal ion after substrate binding.</text>
</comment>
<comment type="subcellular location">
    <subcellularLocation>
        <location evidence="3">Cytoplasm</location>
    </subcellularLocation>
</comment>
<comment type="similarity">
    <text evidence="3">Belongs to the RNase HII family. RnhC subfamily.</text>
</comment>
<organism>
    <name type="scientific">Streptococcus pneumoniae (strain ATCC BAA-255 / R6)</name>
    <dbReference type="NCBI Taxonomy" id="171101"/>
    <lineage>
        <taxon>Bacteria</taxon>
        <taxon>Bacillati</taxon>
        <taxon>Bacillota</taxon>
        <taxon>Bacilli</taxon>
        <taxon>Lactobacillales</taxon>
        <taxon>Streptococcaceae</taxon>
        <taxon>Streptococcus</taxon>
    </lineage>
</organism>
<proteinExistence type="inferred from homology"/>
<sequence>MASITLTPSEKDIQAFLEHYQTSLAPSKNPYIRYFLKLPQATVSIYTSGKILLQGEGAEKYASFFGYQAVEQTSGQNLPLIGTDEVGNGSYFGGLAVVAAFVTPDQHDFLRKLGVGDSKTLTDQKIRQIAPILKEKIQHQALLLSPSKYNEVIGDRYNAVSVKVALHNQAIYLLLQKGVQPEKIVIDAFTSAKNYDKYLAQETNRFSNPISLEEKAEGKYLAVAVSSVIARDLFLENLENLGRELGYQLPSGAGTASDKVASQILQAYGMQGLNFCAKLHFKNTEKAKNA</sequence>
<evidence type="ECO:0000250" key="1"/>
<evidence type="ECO:0000255" key="2">
    <source>
        <dbReference type="PROSITE-ProRule" id="PRU01319"/>
    </source>
</evidence>
<evidence type="ECO:0000305" key="3"/>
<dbReference type="EC" id="3.1.26.4"/>
<dbReference type="EMBL" id="AE007317">
    <property type="protein sequence ID" value="AAK99169.1"/>
    <property type="molecule type" value="Genomic_DNA"/>
</dbReference>
<dbReference type="RefSeq" id="NP_357959.1">
    <property type="nucleotide sequence ID" value="NC_003098.1"/>
</dbReference>
<dbReference type="RefSeq" id="WP_000146861.1">
    <property type="nucleotide sequence ID" value="NC_003098.1"/>
</dbReference>
<dbReference type="SMR" id="P59660"/>
<dbReference type="STRING" id="171101.spr0365"/>
<dbReference type="KEGG" id="spr:spr0365"/>
<dbReference type="PATRIC" id="fig|171101.6.peg.406"/>
<dbReference type="eggNOG" id="COG1039">
    <property type="taxonomic scope" value="Bacteria"/>
</dbReference>
<dbReference type="HOGENOM" id="CLU_059546_1_0_9"/>
<dbReference type="Proteomes" id="UP000000586">
    <property type="component" value="Chromosome"/>
</dbReference>
<dbReference type="GO" id="GO:0005737">
    <property type="term" value="C:cytoplasm"/>
    <property type="evidence" value="ECO:0007669"/>
    <property type="project" value="UniProtKB-SubCell"/>
</dbReference>
<dbReference type="GO" id="GO:0032299">
    <property type="term" value="C:ribonuclease H2 complex"/>
    <property type="evidence" value="ECO:0000318"/>
    <property type="project" value="GO_Central"/>
</dbReference>
<dbReference type="GO" id="GO:0000287">
    <property type="term" value="F:magnesium ion binding"/>
    <property type="evidence" value="ECO:0007669"/>
    <property type="project" value="UniProtKB-UniRule"/>
</dbReference>
<dbReference type="GO" id="GO:0003723">
    <property type="term" value="F:RNA binding"/>
    <property type="evidence" value="ECO:0007669"/>
    <property type="project" value="InterPro"/>
</dbReference>
<dbReference type="GO" id="GO:0004523">
    <property type="term" value="F:RNA-DNA hybrid ribonuclease activity"/>
    <property type="evidence" value="ECO:0000318"/>
    <property type="project" value="GO_Central"/>
</dbReference>
<dbReference type="GO" id="GO:0043137">
    <property type="term" value="P:DNA replication, removal of RNA primer"/>
    <property type="evidence" value="ECO:0000318"/>
    <property type="project" value="GO_Central"/>
</dbReference>
<dbReference type="GO" id="GO:0006298">
    <property type="term" value="P:mismatch repair"/>
    <property type="evidence" value="ECO:0000318"/>
    <property type="project" value="GO_Central"/>
</dbReference>
<dbReference type="CDD" id="cd06590">
    <property type="entry name" value="RNase_HII_bacteria_HIII_like"/>
    <property type="match status" value="1"/>
</dbReference>
<dbReference type="CDD" id="cd14796">
    <property type="entry name" value="RNAse_HIII_N"/>
    <property type="match status" value="1"/>
</dbReference>
<dbReference type="FunFam" id="3.30.420.10:FF:000047">
    <property type="entry name" value="Ribonuclease HIII"/>
    <property type="match status" value="1"/>
</dbReference>
<dbReference type="Gene3D" id="3.30.420.10">
    <property type="entry name" value="Ribonuclease H-like superfamily/Ribonuclease H"/>
    <property type="match status" value="1"/>
</dbReference>
<dbReference type="Gene3D" id="3.30.310.10">
    <property type="entry name" value="TATA-Binding Protein"/>
    <property type="match status" value="1"/>
</dbReference>
<dbReference type="HAMAP" id="MF_00053">
    <property type="entry name" value="RNase_HIII"/>
    <property type="match status" value="1"/>
</dbReference>
<dbReference type="InterPro" id="IPR001352">
    <property type="entry name" value="RNase_HII/HIII"/>
</dbReference>
<dbReference type="InterPro" id="IPR024567">
    <property type="entry name" value="RNase_HII/HIII_dom"/>
</dbReference>
<dbReference type="InterPro" id="IPR004641">
    <property type="entry name" value="RNase_HIII"/>
</dbReference>
<dbReference type="InterPro" id="IPR024568">
    <property type="entry name" value="RNase_HIII_N"/>
</dbReference>
<dbReference type="InterPro" id="IPR012337">
    <property type="entry name" value="RNaseH-like_sf"/>
</dbReference>
<dbReference type="InterPro" id="IPR036397">
    <property type="entry name" value="RNaseH_sf"/>
</dbReference>
<dbReference type="InterPro" id="IPR012295">
    <property type="entry name" value="TBP_dom_sf"/>
</dbReference>
<dbReference type="NCBIfam" id="TIGR00716">
    <property type="entry name" value="rnhC"/>
    <property type="match status" value="1"/>
</dbReference>
<dbReference type="PANTHER" id="PTHR10954:SF23">
    <property type="entry name" value="RIBONUCLEASE"/>
    <property type="match status" value="1"/>
</dbReference>
<dbReference type="PANTHER" id="PTHR10954">
    <property type="entry name" value="RIBONUCLEASE H2 SUBUNIT A"/>
    <property type="match status" value="1"/>
</dbReference>
<dbReference type="Pfam" id="PF11858">
    <property type="entry name" value="DUF3378"/>
    <property type="match status" value="1"/>
</dbReference>
<dbReference type="Pfam" id="PF01351">
    <property type="entry name" value="RNase_HII"/>
    <property type="match status" value="1"/>
</dbReference>
<dbReference type="PIRSF" id="PIRSF037748">
    <property type="entry name" value="RnhC"/>
    <property type="match status" value="1"/>
</dbReference>
<dbReference type="SUPFAM" id="SSF53098">
    <property type="entry name" value="Ribonuclease H-like"/>
    <property type="match status" value="1"/>
</dbReference>
<dbReference type="PROSITE" id="PS51975">
    <property type="entry name" value="RNASE_H_2"/>
    <property type="match status" value="1"/>
</dbReference>
<name>RNH3_STRR6</name>
<keyword id="KW-0963">Cytoplasm</keyword>
<keyword id="KW-0255">Endonuclease</keyword>
<keyword id="KW-0378">Hydrolase</keyword>
<keyword id="KW-0460">Magnesium</keyword>
<keyword id="KW-0479">Metal-binding</keyword>
<keyword id="KW-0540">Nuclease</keyword>
<keyword id="KW-1185">Reference proteome</keyword>
<accession>P59660</accession>